<name>PURR_YERP3</name>
<sequence length="341" mass="37839">MATIKDVAKHAGVSTTTVSHVINKTRFVAENTKAAVWAAIKELHYSPSAVARSLKVNHTKSIGLLATSSEAPYFAEVIEAVENSCYSKGYTLILCNSHNNLDKQKAYLAMLAQKRVDGLLVMCSEYPDQLLGMLEDYRNIPMVVMDWGTARGDFTDSIIDNAFEGGYLAGRYLIERGHRDIGAIPGQLARNTGGGRHQGFLKALEEANIPVREEWIVQGDFEPESGYKAMHQILTQKHRPTAVFCGGDIMAMGAICAADELGLRVPQDISVIGYDNVRNARYFSPALTTIHQPKERLGETAFAMLLDRIVSKREDPQTIEVHPKLVERRSVADGPFRDYRR</sequence>
<comment type="function">
    <text evidence="1">Is the main repressor of the genes involved in the de novo synthesis of purine nucleotides, regulating purB, purC, purEK, purF, purHD, purL, purMN and guaBA expression. PurR is allosterically activated to bind its cognate DNA by binding the purine corepressors, hypoxanthine or guanine, thereby effecting transcription repression.</text>
</comment>
<comment type="pathway">
    <text>Purine metabolism; purine nucleotide biosynthesis [regulation].</text>
</comment>
<comment type="subunit">
    <text evidence="1">Homodimer.</text>
</comment>
<comment type="domain">
    <text evidence="1">Consists of two structural and functional domains: an N-terminal DNA-binding domain, approximately the first 60 residues, and a larger C-terminal domain, approximately 280 residues, which imparts the function of corepressor binding and oligomerization.</text>
</comment>
<gene>
    <name evidence="1" type="primary">purR</name>
    <name type="ordered locus">YpsIP31758_1755</name>
</gene>
<protein>
    <recommendedName>
        <fullName evidence="1">HTH-type transcriptional repressor PurR</fullName>
    </recommendedName>
    <alternativeName>
        <fullName evidence="1">Pur regulon repressor</fullName>
    </alternativeName>
    <alternativeName>
        <fullName evidence="1">Purine nucleotide synthesis repressor</fullName>
    </alternativeName>
</protein>
<reference key="1">
    <citation type="journal article" date="2007" name="PLoS Genet.">
        <title>The complete genome sequence of Yersinia pseudotuberculosis IP31758, the causative agent of Far East scarlet-like fever.</title>
        <authorList>
            <person name="Eppinger M."/>
            <person name="Rosovitz M.J."/>
            <person name="Fricke W.F."/>
            <person name="Rasko D.A."/>
            <person name="Kokorina G."/>
            <person name="Fayolle C."/>
            <person name="Lindler L.E."/>
            <person name="Carniel E."/>
            <person name="Ravel J."/>
        </authorList>
    </citation>
    <scope>NUCLEOTIDE SEQUENCE [LARGE SCALE GENOMIC DNA]</scope>
    <source>
        <strain>IP 31758</strain>
    </source>
</reference>
<proteinExistence type="inferred from homology"/>
<keyword id="KW-0238">DNA-binding</keyword>
<keyword id="KW-0658">Purine biosynthesis</keyword>
<keyword id="KW-0678">Repressor</keyword>
<keyword id="KW-0804">Transcription</keyword>
<keyword id="KW-0805">Transcription regulation</keyword>
<organism>
    <name type="scientific">Yersinia pseudotuberculosis serotype O:1b (strain IP 31758)</name>
    <dbReference type="NCBI Taxonomy" id="349747"/>
    <lineage>
        <taxon>Bacteria</taxon>
        <taxon>Pseudomonadati</taxon>
        <taxon>Pseudomonadota</taxon>
        <taxon>Gammaproteobacteria</taxon>
        <taxon>Enterobacterales</taxon>
        <taxon>Yersiniaceae</taxon>
        <taxon>Yersinia</taxon>
    </lineage>
</organism>
<accession>A7FHK2</accession>
<feature type="chain" id="PRO_1000085881" description="HTH-type transcriptional repressor PurR">
    <location>
        <begin position="1"/>
        <end position="341"/>
    </location>
</feature>
<feature type="domain" description="HTH lacI-type" evidence="1">
    <location>
        <begin position="2"/>
        <end position="56"/>
    </location>
</feature>
<feature type="DNA-binding region" description="H-T-H motif" evidence="1">
    <location>
        <begin position="4"/>
        <end position="23"/>
    </location>
</feature>
<feature type="DNA-binding region" evidence="1">
    <location>
        <begin position="48"/>
        <end position="56"/>
    </location>
</feature>
<feature type="binding site" evidence="1">
    <location>
        <position position="73"/>
    </location>
    <ligand>
        <name>hypoxanthine</name>
        <dbReference type="ChEBI" id="CHEBI:17368"/>
    </ligand>
</feature>
<feature type="binding site" evidence="1">
    <location>
        <position position="190"/>
    </location>
    <ligand>
        <name>hypoxanthine</name>
        <dbReference type="ChEBI" id="CHEBI:17368"/>
    </ligand>
</feature>
<feature type="binding site" evidence="1">
    <location>
        <position position="192"/>
    </location>
    <ligand>
        <name>hypoxanthine</name>
        <dbReference type="ChEBI" id="CHEBI:17368"/>
    </ligand>
</feature>
<feature type="binding site" evidence="1">
    <location>
        <position position="221"/>
    </location>
    <ligand>
        <name>hypoxanthine</name>
        <dbReference type="ChEBI" id="CHEBI:17368"/>
    </ligand>
</feature>
<feature type="binding site" evidence="1">
    <location>
        <position position="275"/>
    </location>
    <ligand>
        <name>hypoxanthine</name>
        <dbReference type="ChEBI" id="CHEBI:17368"/>
    </ligand>
</feature>
<evidence type="ECO:0000255" key="1">
    <source>
        <dbReference type="HAMAP-Rule" id="MF_01277"/>
    </source>
</evidence>
<dbReference type="EMBL" id="CP000720">
    <property type="protein sequence ID" value="ABS48818.1"/>
    <property type="molecule type" value="Genomic_DNA"/>
</dbReference>
<dbReference type="RefSeq" id="WP_002210943.1">
    <property type="nucleotide sequence ID" value="NC_009708.1"/>
</dbReference>
<dbReference type="SMR" id="A7FHK2"/>
<dbReference type="GeneID" id="57976289"/>
<dbReference type="KEGG" id="ypi:YpsIP31758_1755"/>
<dbReference type="HOGENOM" id="CLU_037628_6_2_6"/>
<dbReference type="UniPathway" id="UPA00488"/>
<dbReference type="Proteomes" id="UP000002412">
    <property type="component" value="Chromosome"/>
</dbReference>
<dbReference type="GO" id="GO:0003700">
    <property type="term" value="F:DNA-binding transcription factor activity"/>
    <property type="evidence" value="ECO:0007669"/>
    <property type="project" value="TreeGrafter"/>
</dbReference>
<dbReference type="GO" id="GO:0000976">
    <property type="term" value="F:transcription cis-regulatory region binding"/>
    <property type="evidence" value="ECO:0007669"/>
    <property type="project" value="TreeGrafter"/>
</dbReference>
<dbReference type="GO" id="GO:0045892">
    <property type="term" value="P:negative regulation of DNA-templated transcription"/>
    <property type="evidence" value="ECO:0007669"/>
    <property type="project" value="UniProtKB-UniRule"/>
</dbReference>
<dbReference type="GO" id="GO:0006164">
    <property type="term" value="P:purine nucleotide biosynthetic process"/>
    <property type="evidence" value="ECO:0007669"/>
    <property type="project" value="UniProtKB-UniPathway"/>
</dbReference>
<dbReference type="CDD" id="cd01392">
    <property type="entry name" value="HTH_LacI"/>
    <property type="match status" value="1"/>
</dbReference>
<dbReference type="CDD" id="cd06275">
    <property type="entry name" value="PBP1_PurR"/>
    <property type="match status" value="1"/>
</dbReference>
<dbReference type="FunFam" id="1.10.260.40:FF:000002">
    <property type="entry name" value="HTH-type transcriptional repressor PurR"/>
    <property type="match status" value="1"/>
</dbReference>
<dbReference type="FunFam" id="3.40.50.2300:FF:000045">
    <property type="entry name" value="HTH-type transcriptional repressor PurR"/>
    <property type="match status" value="1"/>
</dbReference>
<dbReference type="Gene3D" id="3.40.50.2300">
    <property type="match status" value="2"/>
</dbReference>
<dbReference type="Gene3D" id="1.10.260.40">
    <property type="entry name" value="lambda repressor-like DNA-binding domains"/>
    <property type="match status" value="1"/>
</dbReference>
<dbReference type="HAMAP" id="MF_01277">
    <property type="entry name" value="HTH_type_PurR"/>
    <property type="match status" value="1"/>
</dbReference>
<dbReference type="InterPro" id="IPR000843">
    <property type="entry name" value="HTH_LacI"/>
</dbReference>
<dbReference type="InterPro" id="IPR046335">
    <property type="entry name" value="LacI/GalR-like_sensor"/>
</dbReference>
<dbReference type="InterPro" id="IPR010982">
    <property type="entry name" value="Lambda_DNA-bd_dom_sf"/>
</dbReference>
<dbReference type="InterPro" id="IPR028082">
    <property type="entry name" value="Peripla_BP_I"/>
</dbReference>
<dbReference type="InterPro" id="IPR023588">
    <property type="entry name" value="Tscrpt_reg_HTH_PurR"/>
</dbReference>
<dbReference type="NCBIfam" id="NF007979">
    <property type="entry name" value="PRK10703.1"/>
    <property type="match status" value="1"/>
</dbReference>
<dbReference type="PANTHER" id="PTHR30146:SF148">
    <property type="entry name" value="HTH-TYPE TRANSCRIPTIONAL REPRESSOR PURR-RELATED"/>
    <property type="match status" value="1"/>
</dbReference>
<dbReference type="PANTHER" id="PTHR30146">
    <property type="entry name" value="LACI-RELATED TRANSCRIPTIONAL REPRESSOR"/>
    <property type="match status" value="1"/>
</dbReference>
<dbReference type="Pfam" id="PF00356">
    <property type="entry name" value="LacI"/>
    <property type="match status" value="1"/>
</dbReference>
<dbReference type="Pfam" id="PF13377">
    <property type="entry name" value="Peripla_BP_3"/>
    <property type="match status" value="1"/>
</dbReference>
<dbReference type="PRINTS" id="PR00036">
    <property type="entry name" value="HTHLACI"/>
</dbReference>
<dbReference type="SMART" id="SM00354">
    <property type="entry name" value="HTH_LACI"/>
    <property type="match status" value="1"/>
</dbReference>
<dbReference type="SUPFAM" id="SSF47413">
    <property type="entry name" value="lambda repressor-like DNA-binding domains"/>
    <property type="match status" value="1"/>
</dbReference>
<dbReference type="SUPFAM" id="SSF53822">
    <property type="entry name" value="Periplasmic binding protein-like I"/>
    <property type="match status" value="1"/>
</dbReference>
<dbReference type="PROSITE" id="PS00356">
    <property type="entry name" value="HTH_LACI_1"/>
    <property type="match status" value="1"/>
</dbReference>
<dbReference type="PROSITE" id="PS50932">
    <property type="entry name" value="HTH_LACI_2"/>
    <property type="match status" value="1"/>
</dbReference>